<organism>
    <name type="scientific">Schizosaccharomyces pombe (strain 972 / ATCC 24843)</name>
    <name type="common">Fission yeast</name>
    <dbReference type="NCBI Taxonomy" id="284812"/>
    <lineage>
        <taxon>Eukaryota</taxon>
        <taxon>Fungi</taxon>
        <taxon>Dikarya</taxon>
        <taxon>Ascomycota</taxon>
        <taxon>Taphrinomycotina</taxon>
        <taxon>Schizosaccharomycetes</taxon>
        <taxon>Schizosaccharomycetales</taxon>
        <taxon>Schizosaccharomycetaceae</taxon>
        <taxon>Schizosaccharomyces</taxon>
    </lineage>
</organism>
<evidence type="ECO:0000305" key="1"/>
<dbReference type="EMBL" id="CU329670">
    <property type="protein sequence ID" value="CAA15727.1"/>
    <property type="molecule type" value="Genomic_DNA"/>
</dbReference>
<dbReference type="PIR" id="T37508">
    <property type="entry name" value="T37508"/>
</dbReference>
<dbReference type="RefSeq" id="NP_593265.1">
    <property type="nucleotide sequence ID" value="NM_001018662.2"/>
</dbReference>
<dbReference type="SMR" id="O42653"/>
<dbReference type="BioGRID" id="278167">
    <property type="interactions" value="15"/>
</dbReference>
<dbReference type="STRING" id="284812.O42653"/>
<dbReference type="iPTMnet" id="O42653"/>
<dbReference type="PaxDb" id="4896-SPAC10F6.14c.1"/>
<dbReference type="EnsemblFungi" id="SPAC10F6.14c.1">
    <property type="protein sequence ID" value="SPAC10F6.14c.1:pep"/>
    <property type="gene ID" value="SPAC10F6.14c"/>
</dbReference>
<dbReference type="KEGG" id="spo:2541671"/>
<dbReference type="PomBase" id="SPAC10F6.14c"/>
<dbReference type="VEuPathDB" id="FungiDB:SPAC10F6.14c"/>
<dbReference type="eggNOG" id="KOG1235">
    <property type="taxonomic scope" value="Eukaryota"/>
</dbReference>
<dbReference type="HOGENOM" id="CLU_006533_2_4_1"/>
<dbReference type="InParanoid" id="O42653"/>
<dbReference type="OMA" id="DVMTTMV"/>
<dbReference type="PhylomeDB" id="O42653"/>
<dbReference type="PRO" id="PR:O42653"/>
<dbReference type="Proteomes" id="UP000002485">
    <property type="component" value="Chromosome I"/>
</dbReference>
<dbReference type="GO" id="GO:0005739">
    <property type="term" value="C:mitochondrion"/>
    <property type="evidence" value="ECO:0000255"/>
    <property type="project" value="PomBase"/>
</dbReference>
<dbReference type="GO" id="GO:0016301">
    <property type="term" value="F:kinase activity"/>
    <property type="evidence" value="ECO:0000255"/>
    <property type="project" value="PomBase"/>
</dbReference>
<dbReference type="CDD" id="cd13969">
    <property type="entry name" value="ADCK1-like"/>
    <property type="match status" value="1"/>
</dbReference>
<dbReference type="InterPro" id="IPR004147">
    <property type="entry name" value="ABC1_dom"/>
</dbReference>
<dbReference type="InterPro" id="IPR045307">
    <property type="entry name" value="ADCK1_dom"/>
</dbReference>
<dbReference type="InterPro" id="IPR011009">
    <property type="entry name" value="Kinase-like_dom_sf"/>
</dbReference>
<dbReference type="InterPro" id="IPR051130">
    <property type="entry name" value="Mito_struct-func_regulator"/>
</dbReference>
<dbReference type="PANTHER" id="PTHR43173">
    <property type="entry name" value="ABC1 FAMILY PROTEIN"/>
    <property type="match status" value="1"/>
</dbReference>
<dbReference type="PANTHER" id="PTHR43173:SF37">
    <property type="entry name" value="ABC1 FAMILY PROTEIN C10F6.14C"/>
    <property type="match status" value="1"/>
</dbReference>
<dbReference type="Pfam" id="PF03109">
    <property type="entry name" value="ABC1"/>
    <property type="match status" value="1"/>
</dbReference>
<dbReference type="SUPFAM" id="SSF56112">
    <property type="entry name" value="Protein kinase-like (PK-like)"/>
    <property type="match status" value="1"/>
</dbReference>
<sequence>MLTSWRTISLLQKTTSRFIKRSKTYADVRYNSQALQNHGVPGNKRKWMKRFVFVGAAGIGVYAWDRVYNAHALTRSIRTVYTASIIAADYKLNFSEKKADKIDALHQRVAQRLFKTIYKNGGLYIKMGQIIAMQSNNLPEAYGKAFQGMFDNAPQVEWEELQDIFKEQYGRPVEEVFASIEKRAAASASIAQVHRAVLPSGEKVAVKIQKPDVAKQMSWDLLVYKYMMYVYDKWIFHIPLYFTVDYVSERLRSEVDFTTEANNSEHAREGVEETDYLRDKIYIPKVYKEISGKRVMVTEWADGIPLYDQTALSEAGMSKKEILTNLFRFLAFQMFHSKQVHCDPHPGNILVRKNQAGLCQTVILDHGLYVFESEKFRKEFALLFTAAYSLDKKSILQVMDAWGIGQPELFANRMLNIPMDEEQPHTGEKIISKKEAFQQQLAERKKFIGFLQDCTRLPKELLMLGRCLMLIQKNNQNFGYPVNSIAVMAKVADKYTTDKPSPTWYQRLLSPIFWVFQHLFYPGNFRLPELTNDKK</sequence>
<reference key="1">
    <citation type="journal article" date="2002" name="Nature">
        <title>The genome sequence of Schizosaccharomyces pombe.</title>
        <authorList>
            <person name="Wood V."/>
            <person name="Gwilliam R."/>
            <person name="Rajandream M.A."/>
            <person name="Lyne M.H."/>
            <person name="Lyne R."/>
            <person name="Stewart A."/>
            <person name="Sgouros J.G."/>
            <person name="Peat N."/>
            <person name="Hayles J."/>
            <person name="Baker S.G."/>
            <person name="Basham D."/>
            <person name="Bowman S."/>
            <person name="Brooks K."/>
            <person name="Brown D."/>
            <person name="Brown S."/>
            <person name="Chillingworth T."/>
            <person name="Churcher C.M."/>
            <person name="Collins M."/>
            <person name="Connor R."/>
            <person name="Cronin A."/>
            <person name="Davis P."/>
            <person name="Feltwell T."/>
            <person name="Fraser A."/>
            <person name="Gentles S."/>
            <person name="Goble A."/>
            <person name="Hamlin N."/>
            <person name="Harris D.E."/>
            <person name="Hidalgo J."/>
            <person name="Hodgson G."/>
            <person name="Holroyd S."/>
            <person name="Hornsby T."/>
            <person name="Howarth S."/>
            <person name="Huckle E.J."/>
            <person name="Hunt S."/>
            <person name="Jagels K."/>
            <person name="James K.D."/>
            <person name="Jones L."/>
            <person name="Jones M."/>
            <person name="Leather S."/>
            <person name="McDonald S."/>
            <person name="McLean J."/>
            <person name="Mooney P."/>
            <person name="Moule S."/>
            <person name="Mungall K.L."/>
            <person name="Murphy L.D."/>
            <person name="Niblett D."/>
            <person name="Odell C."/>
            <person name="Oliver K."/>
            <person name="O'Neil S."/>
            <person name="Pearson D."/>
            <person name="Quail M.A."/>
            <person name="Rabbinowitsch E."/>
            <person name="Rutherford K.M."/>
            <person name="Rutter S."/>
            <person name="Saunders D."/>
            <person name="Seeger K."/>
            <person name="Sharp S."/>
            <person name="Skelton J."/>
            <person name="Simmonds M.N."/>
            <person name="Squares R."/>
            <person name="Squares S."/>
            <person name="Stevens K."/>
            <person name="Taylor K."/>
            <person name="Taylor R.G."/>
            <person name="Tivey A."/>
            <person name="Walsh S.V."/>
            <person name="Warren T."/>
            <person name="Whitehead S."/>
            <person name="Woodward J.R."/>
            <person name="Volckaert G."/>
            <person name="Aert R."/>
            <person name="Robben J."/>
            <person name="Grymonprez B."/>
            <person name="Weltjens I."/>
            <person name="Vanstreels E."/>
            <person name="Rieger M."/>
            <person name="Schaefer M."/>
            <person name="Mueller-Auer S."/>
            <person name="Gabel C."/>
            <person name="Fuchs M."/>
            <person name="Duesterhoeft A."/>
            <person name="Fritzc C."/>
            <person name="Holzer E."/>
            <person name="Moestl D."/>
            <person name="Hilbert H."/>
            <person name="Borzym K."/>
            <person name="Langer I."/>
            <person name="Beck A."/>
            <person name="Lehrach H."/>
            <person name="Reinhardt R."/>
            <person name="Pohl T.M."/>
            <person name="Eger P."/>
            <person name="Zimmermann W."/>
            <person name="Wedler H."/>
            <person name="Wambutt R."/>
            <person name="Purnelle B."/>
            <person name="Goffeau A."/>
            <person name="Cadieu E."/>
            <person name="Dreano S."/>
            <person name="Gloux S."/>
            <person name="Lelaure V."/>
            <person name="Mottier S."/>
            <person name="Galibert F."/>
            <person name="Aves S.J."/>
            <person name="Xiang Z."/>
            <person name="Hunt C."/>
            <person name="Moore K."/>
            <person name="Hurst S.M."/>
            <person name="Lucas M."/>
            <person name="Rochet M."/>
            <person name="Gaillardin C."/>
            <person name="Tallada V.A."/>
            <person name="Garzon A."/>
            <person name="Thode G."/>
            <person name="Daga R.R."/>
            <person name="Cruzado L."/>
            <person name="Jimenez J."/>
            <person name="Sanchez M."/>
            <person name="del Rey F."/>
            <person name="Benito J."/>
            <person name="Dominguez A."/>
            <person name="Revuelta J.L."/>
            <person name="Moreno S."/>
            <person name="Armstrong J."/>
            <person name="Forsburg S.L."/>
            <person name="Cerutti L."/>
            <person name="Lowe T."/>
            <person name="McCombie W.R."/>
            <person name="Paulsen I."/>
            <person name="Potashkin J."/>
            <person name="Shpakovski G.V."/>
            <person name="Ussery D."/>
            <person name="Barrell B.G."/>
            <person name="Nurse P."/>
        </authorList>
    </citation>
    <scope>NUCLEOTIDE SEQUENCE [LARGE SCALE GENOMIC DNA]</scope>
    <source>
        <strain>972 / ATCC 24843</strain>
    </source>
</reference>
<comment type="similarity">
    <text evidence="1">Belongs to the protein kinase superfamily. ADCK protein kinase family.</text>
</comment>
<name>YF9E_SCHPO</name>
<gene>
    <name type="ORF">SPAC10F6.14c</name>
</gene>
<accession>O42653</accession>
<protein>
    <recommendedName>
        <fullName>ABC1 family protein C10F6.14c</fullName>
    </recommendedName>
</protein>
<keyword id="KW-1185">Reference proteome</keyword>
<proteinExistence type="inferred from homology"/>
<feature type="chain" id="PRO_0000310290" description="ABC1 family protein C10F6.14c">
    <location>
        <begin position="1"/>
        <end position="535"/>
    </location>
</feature>